<sequence>AKMSLSSYILILTLVLFSQGILLSASKSIRNLEDDMVFNTFRLGKAFQKEDTAEKSVVAPSLEQYKNDENS</sequence>
<feature type="signal peptide" evidence="2">
    <location>
        <begin position="1" status="less than"/>
        <end position="20"/>
    </location>
</feature>
<feature type="chain" id="PRO_0000019111" description="Pro-MCH">
    <location>
        <begin position="21"/>
        <end position="71" status="greater than"/>
    </location>
</feature>
<feature type="non-terminal residue">
    <location>
        <position position="1"/>
    </location>
</feature>
<feature type="non-terminal residue">
    <location>
        <position position="71"/>
    </location>
</feature>
<evidence type="ECO:0000250" key="1"/>
<evidence type="ECO:0000255" key="2"/>
<evidence type="ECO:0000305" key="3"/>
<accession>O62691</accession>
<organism>
    <name type="scientific">Carlito syrichta</name>
    <name type="common">Philippine tarsier</name>
    <name type="synonym">Tarsius syrichta</name>
    <dbReference type="NCBI Taxonomy" id="1868482"/>
    <lineage>
        <taxon>Eukaryota</taxon>
        <taxon>Metazoa</taxon>
        <taxon>Chordata</taxon>
        <taxon>Craniata</taxon>
        <taxon>Vertebrata</taxon>
        <taxon>Euteleostomi</taxon>
        <taxon>Mammalia</taxon>
        <taxon>Eutheria</taxon>
        <taxon>Euarchontoglires</taxon>
        <taxon>Primates</taxon>
        <taxon>Haplorrhini</taxon>
        <taxon>Tarsiiformes</taxon>
        <taxon>Tarsiidae</taxon>
        <taxon>Carlito</taxon>
    </lineage>
</organism>
<gene>
    <name type="primary">PMCH</name>
</gene>
<keyword id="KW-1185">Reference proteome</keyword>
<keyword id="KW-0964">Secreted</keyword>
<keyword id="KW-0732">Signal</keyword>
<proteinExistence type="inferred from homology"/>
<comment type="subcellular location">
    <subcellularLocation>
        <location evidence="1">Secreted</location>
    </subcellularLocation>
</comment>
<comment type="similarity">
    <text evidence="3">Belongs to the melanin-concentrating hormone family.</text>
</comment>
<reference key="1">
    <citation type="journal article" date="1998" name="Mol. Biol. Evol.">
        <title>Emergence of a brain-expressed variant melanin-concentrating hormone gene during higher primate evolution: a gene 'in search of a function'.</title>
        <authorList>
            <person name="Viale A."/>
            <person name="Ortola C."/>
            <person name="Richard F."/>
            <person name="Vernier P."/>
            <person name="Presse F."/>
            <person name="Schilling S."/>
            <person name="Dutrillaux B."/>
            <person name="Nahon J.-L."/>
        </authorList>
    </citation>
    <scope>NUCLEOTIDE SEQUENCE [GENOMIC DNA]</scope>
</reference>
<protein>
    <recommendedName>
        <fullName>Pro-MCH</fullName>
    </recommendedName>
</protein>
<name>MCH_CARSF</name>
<dbReference type="EMBL" id="AF029399">
    <property type="protein sequence ID" value="AAC05252.1"/>
    <property type="molecule type" value="Genomic_DNA"/>
</dbReference>
<dbReference type="STRING" id="1868482.ENSTSYP00000002686"/>
<dbReference type="HOGENOM" id="CLU_1610172_0_0_1"/>
<dbReference type="Proteomes" id="UP000189704">
    <property type="component" value="Unplaced"/>
</dbReference>
<dbReference type="GO" id="GO:0005576">
    <property type="term" value="C:extracellular region"/>
    <property type="evidence" value="ECO:0007669"/>
    <property type="project" value="UniProtKB-SubCell"/>
</dbReference>
<dbReference type="GO" id="GO:0045202">
    <property type="term" value="C:synapse"/>
    <property type="evidence" value="ECO:0007669"/>
    <property type="project" value="GOC"/>
</dbReference>
<dbReference type="GO" id="GO:0030354">
    <property type="term" value="F:melanin-concentrating hormone activity"/>
    <property type="evidence" value="ECO:0007669"/>
    <property type="project" value="InterPro"/>
</dbReference>
<dbReference type="GO" id="GO:0031777">
    <property type="term" value="F:type 1 melanin-concentrating hormone receptor binding"/>
    <property type="evidence" value="ECO:0007669"/>
    <property type="project" value="TreeGrafter"/>
</dbReference>
<dbReference type="GO" id="GO:0007268">
    <property type="term" value="P:chemical synaptic transmission"/>
    <property type="evidence" value="ECO:0007669"/>
    <property type="project" value="InterPro"/>
</dbReference>
<dbReference type="InterPro" id="IPR005456">
    <property type="entry name" value="Prepro-melanin_conc_hormone"/>
</dbReference>
<dbReference type="PANTHER" id="PTHR12091">
    <property type="entry name" value="MELANIN-CONCENTRATING HORMONE"/>
    <property type="match status" value="1"/>
</dbReference>
<dbReference type="PANTHER" id="PTHR12091:SF0">
    <property type="entry name" value="PRO-MCH"/>
    <property type="match status" value="1"/>
</dbReference>